<protein>
    <recommendedName>
        <fullName evidence="10">Zinc transporter 7</fullName>
    </recommendedName>
    <alternativeName>
        <fullName evidence="12">Solute carrier family 30 member 7</fullName>
    </alternativeName>
    <alternativeName>
        <fullName evidence="11">Znt-like transporter 2</fullName>
    </alternativeName>
</protein>
<comment type="function">
    <text evidence="2 5 6">Zinc ion transporter mediating zinc entry from the cytosol into the lumen of organelles along the secretory pathway (PubMed:12446736, PubMed:17954933). By contributing to zinc ion homeostasis within the early secretory pathway, regulates the activation and folding of enzymes like alkaline phosphatases (By similarity).</text>
</comment>
<comment type="catalytic activity">
    <reaction evidence="5">
        <text>Zn(2+)(in) = Zn(2+)(out)</text>
        <dbReference type="Rhea" id="RHEA:29351"/>
        <dbReference type="ChEBI" id="CHEBI:29105"/>
    </reaction>
</comment>
<comment type="subunit">
    <text evidence="2">Homooligomer.</text>
</comment>
<comment type="subcellular location">
    <subcellularLocation>
        <location evidence="5 7">Golgi apparatus membrane</location>
        <topology evidence="3">Multi-pass membrane protein</topology>
    </subcellularLocation>
    <subcellularLocation>
        <location evidence="5">Cytoplasmic vesicle</location>
    </subcellularLocation>
    <subcellularLocation>
        <location evidence="7">Golgi apparatus</location>
        <location evidence="7">trans-Golgi network</location>
    </subcellularLocation>
    <subcellularLocation>
        <location evidence="1">Sarcoplasmic reticulum</location>
    </subcellularLocation>
    <subcellularLocation>
        <location evidence="1">Mitochondrion</location>
    </subcellularLocation>
</comment>
<comment type="tissue specificity">
    <text evidence="5 6 7">Highly expressed in liver, spleen, duodenum and part of the jejunum of small intestine (at protein level). Moderately expressed in kidney, lung, and brain. Barely detectable in heart (PubMed:12446736, PubMed:17954933). In brain, expressed in cerebellum, cerebral cortex and hippocampus (at protein level) (PubMed:19283665).</text>
</comment>
<comment type="disruption phenotype">
    <text evidence="6">Homozygous knockout mice are viable, fertile, and display no obvious morphological abnormalities. However, they accumulate less zinc in cells and tissues and have a low body zinc status. This is associated with classic manifestations of dietary zinc deficiency, reduced food intake and poor growth. A decrease in body fat accumulation and reduced zinc absorption in the gut are observed.</text>
</comment>
<comment type="similarity">
    <text evidence="9">Belongs to the cation diffusion facilitator (CDF) transporter (TC 2.A.4) family. SLC30A subfamily.</text>
</comment>
<dbReference type="EMBL" id="AF529196">
    <property type="protein sequence ID" value="AAO17323.1"/>
    <property type="molecule type" value="mRNA"/>
</dbReference>
<dbReference type="EMBL" id="AF233322">
    <property type="protein sequence ID" value="AAF43423.1"/>
    <property type="molecule type" value="mRNA"/>
</dbReference>
<dbReference type="EMBL" id="AK010008">
    <property type="protein sequence ID" value="BAB26639.1"/>
    <property type="molecule type" value="mRNA"/>
</dbReference>
<dbReference type="EMBL" id="AK075802">
    <property type="protein sequence ID" value="BAC35970.1"/>
    <property type="molecule type" value="mRNA"/>
</dbReference>
<dbReference type="EMBL" id="BC017136">
    <property type="protein sequence ID" value="AAH17136.1"/>
    <property type="molecule type" value="mRNA"/>
</dbReference>
<dbReference type="EMBL" id="BC050193">
    <property type="protein sequence ID" value="AAH50193.1"/>
    <property type="molecule type" value="mRNA"/>
</dbReference>
<dbReference type="CCDS" id="CCDS17783.1"/>
<dbReference type="RefSeq" id="NP_075703.1">
    <property type="nucleotide sequence ID" value="NM_023214.7"/>
</dbReference>
<dbReference type="SMR" id="Q9JKN1"/>
<dbReference type="BioGRID" id="211520">
    <property type="interactions" value="2"/>
</dbReference>
<dbReference type="FunCoup" id="Q9JKN1">
    <property type="interactions" value="2712"/>
</dbReference>
<dbReference type="IntAct" id="Q9JKN1">
    <property type="interactions" value="2"/>
</dbReference>
<dbReference type="MINT" id="Q9JKN1"/>
<dbReference type="STRING" id="10090.ENSMUSP00000065254"/>
<dbReference type="iPTMnet" id="Q9JKN1"/>
<dbReference type="PhosphoSitePlus" id="Q9JKN1"/>
<dbReference type="SwissPalm" id="Q9JKN1"/>
<dbReference type="PaxDb" id="10090-ENSMUSP00000065254"/>
<dbReference type="PeptideAtlas" id="Q9JKN1"/>
<dbReference type="ProteomicsDB" id="275311"/>
<dbReference type="Pumba" id="Q9JKN1"/>
<dbReference type="Antibodypedia" id="20006">
    <property type="antibodies" value="76 antibodies from 17 providers"/>
</dbReference>
<dbReference type="DNASU" id="66500"/>
<dbReference type="Ensembl" id="ENSMUST00000067485.4">
    <property type="protein sequence ID" value="ENSMUSP00000065254.4"/>
    <property type="gene ID" value="ENSMUSG00000054414.5"/>
</dbReference>
<dbReference type="GeneID" id="66500"/>
<dbReference type="KEGG" id="mmu:66500"/>
<dbReference type="UCSC" id="uc008rbt.2">
    <property type="organism name" value="mouse"/>
</dbReference>
<dbReference type="AGR" id="MGI:1913750"/>
<dbReference type="CTD" id="148867"/>
<dbReference type="MGI" id="MGI:1913750">
    <property type="gene designation" value="Slc30a7"/>
</dbReference>
<dbReference type="VEuPathDB" id="HostDB:ENSMUSG00000054414"/>
<dbReference type="eggNOG" id="KOG1484">
    <property type="taxonomic scope" value="Eukaryota"/>
</dbReference>
<dbReference type="GeneTree" id="ENSGT00940000159571"/>
<dbReference type="HOGENOM" id="CLU_013430_0_3_1"/>
<dbReference type="InParanoid" id="Q9JKN1"/>
<dbReference type="OMA" id="KWRANER"/>
<dbReference type="OrthoDB" id="78669at2759"/>
<dbReference type="PhylomeDB" id="Q9JKN1"/>
<dbReference type="TreeFam" id="TF315217"/>
<dbReference type="BioGRID-ORCS" id="66500">
    <property type="hits" value="4 hits in 77 CRISPR screens"/>
</dbReference>
<dbReference type="ChiTaRS" id="Slc30a7">
    <property type="organism name" value="mouse"/>
</dbReference>
<dbReference type="PRO" id="PR:Q9JKN1"/>
<dbReference type="Proteomes" id="UP000000589">
    <property type="component" value="Chromosome 3"/>
</dbReference>
<dbReference type="RNAct" id="Q9JKN1">
    <property type="molecule type" value="protein"/>
</dbReference>
<dbReference type="Bgee" id="ENSMUSG00000054414">
    <property type="expression patterns" value="Expressed in lacrimal gland and 241 other cell types or tissues"/>
</dbReference>
<dbReference type="GO" id="GO:0005737">
    <property type="term" value="C:cytoplasm"/>
    <property type="evidence" value="ECO:0000314"/>
    <property type="project" value="BHF-UCL"/>
</dbReference>
<dbReference type="GO" id="GO:0031410">
    <property type="term" value="C:cytoplasmic vesicle"/>
    <property type="evidence" value="ECO:0000314"/>
    <property type="project" value="MGI"/>
</dbReference>
<dbReference type="GO" id="GO:0005794">
    <property type="term" value="C:Golgi apparatus"/>
    <property type="evidence" value="ECO:0000314"/>
    <property type="project" value="BHF-UCL"/>
</dbReference>
<dbReference type="GO" id="GO:1990674">
    <property type="term" value="C:Golgi cis cisterna membrane"/>
    <property type="evidence" value="ECO:0000250"/>
    <property type="project" value="UniProtKB"/>
</dbReference>
<dbReference type="GO" id="GO:0000139">
    <property type="term" value="C:Golgi membrane"/>
    <property type="evidence" value="ECO:0007669"/>
    <property type="project" value="UniProtKB-SubCell"/>
</dbReference>
<dbReference type="GO" id="GO:0005739">
    <property type="term" value="C:mitochondrion"/>
    <property type="evidence" value="ECO:0000250"/>
    <property type="project" value="UniProtKB"/>
</dbReference>
<dbReference type="GO" id="GO:0048471">
    <property type="term" value="C:perinuclear region of cytoplasm"/>
    <property type="evidence" value="ECO:0000314"/>
    <property type="project" value="BHF-UCL"/>
</dbReference>
<dbReference type="GO" id="GO:0033017">
    <property type="term" value="C:sarcoplasmic reticulum membrane"/>
    <property type="evidence" value="ECO:0000250"/>
    <property type="project" value="UniProtKB"/>
</dbReference>
<dbReference type="GO" id="GO:0042802">
    <property type="term" value="F:identical protein binding"/>
    <property type="evidence" value="ECO:0007669"/>
    <property type="project" value="Ensembl"/>
</dbReference>
<dbReference type="GO" id="GO:0008270">
    <property type="term" value="F:zinc ion binding"/>
    <property type="evidence" value="ECO:0000305"/>
    <property type="project" value="MGI"/>
</dbReference>
<dbReference type="GO" id="GO:0005385">
    <property type="term" value="F:zinc ion transmembrane transporter activity"/>
    <property type="evidence" value="ECO:0000314"/>
    <property type="project" value="UniProtKB"/>
</dbReference>
<dbReference type="GO" id="GO:0006882">
    <property type="term" value="P:intracellular zinc ion homeostasis"/>
    <property type="evidence" value="ECO:0000315"/>
    <property type="project" value="UniProtKB"/>
</dbReference>
<dbReference type="GO" id="GO:1904257">
    <property type="term" value="P:zinc ion import into Golgi lumen"/>
    <property type="evidence" value="ECO:0000314"/>
    <property type="project" value="UniProtKB"/>
</dbReference>
<dbReference type="GO" id="GO:0006829">
    <property type="term" value="P:zinc ion transport"/>
    <property type="evidence" value="ECO:0000314"/>
    <property type="project" value="MGI"/>
</dbReference>
<dbReference type="Gene3D" id="1.20.1510.10">
    <property type="entry name" value="Cation efflux protein transmembrane domain"/>
    <property type="match status" value="1"/>
</dbReference>
<dbReference type="InterPro" id="IPR002524">
    <property type="entry name" value="Cation_efflux"/>
</dbReference>
<dbReference type="InterPro" id="IPR027469">
    <property type="entry name" value="Cation_efflux_TMD_sf"/>
</dbReference>
<dbReference type="InterPro" id="IPR045316">
    <property type="entry name" value="Msc2-like"/>
</dbReference>
<dbReference type="NCBIfam" id="TIGR01297">
    <property type="entry name" value="CDF"/>
    <property type="match status" value="1"/>
</dbReference>
<dbReference type="PANTHER" id="PTHR45755">
    <property type="match status" value="1"/>
</dbReference>
<dbReference type="PANTHER" id="PTHR45755:SF4">
    <property type="entry name" value="ZINC TRANSPORTER 7"/>
    <property type="match status" value="1"/>
</dbReference>
<dbReference type="Pfam" id="PF01545">
    <property type="entry name" value="Cation_efflux"/>
    <property type="match status" value="1"/>
</dbReference>
<dbReference type="SUPFAM" id="SSF161111">
    <property type="entry name" value="Cation efflux protein transmembrane domain-like"/>
    <property type="match status" value="1"/>
</dbReference>
<feature type="chain" id="PRO_0000314300" description="Zinc transporter 7">
    <location>
        <begin position="1"/>
        <end position="378"/>
    </location>
</feature>
<feature type="topological domain" description="Cytoplasmic" evidence="9">
    <location>
        <begin position="1"/>
        <end position="37"/>
    </location>
</feature>
<feature type="transmembrane region" description="Helical" evidence="3">
    <location>
        <begin position="38"/>
        <end position="58"/>
    </location>
</feature>
<feature type="topological domain" description="Lumenal" evidence="9">
    <location>
        <begin position="59"/>
        <end position="67"/>
    </location>
</feature>
<feature type="transmembrane region" description="Helical" evidence="3">
    <location>
        <begin position="68"/>
        <end position="88"/>
    </location>
</feature>
<feature type="topological domain" description="Cytoplasmic" evidence="9">
    <location>
        <begin position="89"/>
        <end position="102"/>
    </location>
</feature>
<feature type="transmembrane region" description="Helical" evidence="3">
    <location>
        <begin position="103"/>
        <end position="123"/>
    </location>
</feature>
<feature type="topological domain" description="Lumenal" evidence="9">
    <location>
        <begin position="124"/>
        <end position="140"/>
    </location>
</feature>
<feature type="transmembrane region" description="Helical" evidence="3">
    <location>
        <begin position="141"/>
        <end position="161"/>
    </location>
</feature>
<feature type="topological domain" description="Cytoplasmic" evidence="9">
    <location>
        <begin position="162"/>
        <end position="238"/>
    </location>
</feature>
<feature type="transmembrane region" description="Helical" evidence="3">
    <location>
        <begin position="239"/>
        <end position="259"/>
    </location>
</feature>
<feature type="topological domain" description="Lumenal" evidence="9">
    <location>
        <begin position="260"/>
        <end position="264"/>
    </location>
</feature>
<feature type="transmembrane region" description="Helical" evidence="3">
    <location>
        <begin position="265"/>
        <end position="285"/>
    </location>
</feature>
<feature type="topological domain" description="Cytoplasmic" evidence="9">
    <location>
        <begin position="286"/>
        <end position="378"/>
    </location>
</feature>
<feature type="region of interest" description="His-rich loop">
    <location>
        <begin position="161"/>
        <end position="220"/>
    </location>
</feature>
<feature type="region of interest" description="Disordered" evidence="4">
    <location>
        <begin position="186"/>
        <end position="224"/>
    </location>
</feature>
<feature type="compositionally biased region" description="Basic and acidic residues" evidence="4">
    <location>
        <begin position="186"/>
        <end position="223"/>
    </location>
</feature>
<feature type="sequence conflict" description="In Ref. 4; AAH50193." evidence="9" ref="4">
    <original>A</original>
    <variation>G</variation>
    <location>
        <position position="257"/>
    </location>
</feature>
<organism>
    <name type="scientific">Mus musculus</name>
    <name type="common">Mouse</name>
    <dbReference type="NCBI Taxonomy" id="10090"/>
    <lineage>
        <taxon>Eukaryota</taxon>
        <taxon>Metazoa</taxon>
        <taxon>Chordata</taxon>
        <taxon>Craniata</taxon>
        <taxon>Vertebrata</taxon>
        <taxon>Euteleostomi</taxon>
        <taxon>Mammalia</taxon>
        <taxon>Eutheria</taxon>
        <taxon>Euarchontoglires</taxon>
        <taxon>Glires</taxon>
        <taxon>Rodentia</taxon>
        <taxon>Myomorpha</taxon>
        <taxon>Muroidea</taxon>
        <taxon>Muridae</taxon>
        <taxon>Murinae</taxon>
        <taxon>Mus</taxon>
        <taxon>Mus</taxon>
    </lineage>
</organism>
<evidence type="ECO:0000250" key="1">
    <source>
        <dbReference type="UniProtKB" id="Q5BJM8"/>
    </source>
</evidence>
<evidence type="ECO:0000250" key="2">
    <source>
        <dbReference type="UniProtKB" id="Q8NEW0"/>
    </source>
</evidence>
<evidence type="ECO:0000255" key="3"/>
<evidence type="ECO:0000256" key="4">
    <source>
        <dbReference type="SAM" id="MobiDB-lite"/>
    </source>
</evidence>
<evidence type="ECO:0000269" key="5">
    <source>
    </source>
</evidence>
<evidence type="ECO:0000269" key="6">
    <source>
    </source>
</evidence>
<evidence type="ECO:0000269" key="7">
    <source>
    </source>
</evidence>
<evidence type="ECO:0000303" key="8">
    <source>
    </source>
</evidence>
<evidence type="ECO:0000305" key="9"/>
<evidence type="ECO:0000305" key="10">
    <source>
    </source>
</evidence>
<evidence type="ECO:0000312" key="11">
    <source>
        <dbReference type="EMBL" id="AAF43423.1"/>
    </source>
</evidence>
<evidence type="ECO:0000312" key="12">
    <source>
        <dbReference type="MGI" id="MGI:1913750"/>
    </source>
</evidence>
<sequence length="378" mass="41790">MLPLSIKDDEYKPPKFNLFGKISGWFRSILSDKTSRNLFFFLCLNLSFAFVELLYGIWSNCLGLISDSFHMFFDSTAILAGLAASVISKWRDNDAFSYGYVRAEVLAGFVNGLFLIFTAFFIFSEGVERALAPPDVHHERLLLVSILGFVVNLVGIFVFNHGGHGHSHGSGHGHSHSLFNGALDHSHGHEDHCHSHEAKHGAAHSHDHDHAHGHGHLHSHDGPSFKATAGPSRQILQGVFLHILADTLGSIGVIASAIMMQNFGLMIADPICSILIAILIVVSVIPLLRESVGILMQRTPPSLENTLPQCYQRVQQLQGVYNLQEQHFWTLCSDVYVGTLKLVVAPDADARWILSQTHNIFTQAGVRQLYVQIDFAAM</sequence>
<proteinExistence type="evidence at protein level"/>
<gene>
    <name evidence="12" type="primary">Slc30a7</name>
    <name evidence="8" type="synonym">Znt7</name>
    <name evidence="11" type="synonym">Zntl2</name>
</gene>
<name>ZNT7_MOUSE</name>
<keyword id="KW-0968">Cytoplasmic vesicle</keyword>
<keyword id="KW-0903">Direct protein sequencing</keyword>
<keyword id="KW-0333">Golgi apparatus</keyword>
<keyword id="KW-0406">Ion transport</keyword>
<keyword id="KW-0472">Membrane</keyword>
<keyword id="KW-0496">Mitochondrion</keyword>
<keyword id="KW-1185">Reference proteome</keyword>
<keyword id="KW-0703">Sarcoplasmic reticulum</keyword>
<keyword id="KW-0812">Transmembrane</keyword>
<keyword id="KW-1133">Transmembrane helix</keyword>
<keyword id="KW-0813">Transport</keyword>
<keyword id="KW-0862">Zinc</keyword>
<keyword id="KW-0864">Zinc transport</keyword>
<reference key="1">
    <citation type="journal article" date="2003" name="J. Biol. Chem.">
        <title>ZnT7, a novel mammalian zinc transporter, accumulates zinc in the Golgi apparatus.</title>
        <authorList>
            <person name="Kirschke C.P."/>
            <person name="Huang L."/>
        </authorList>
    </citation>
    <scope>NUCLEOTIDE SEQUENCE [MRNA]</scope>
    <scope>PROTEIN SEQUENCE OF 299-315</scope>
    <scope>FUNCTION</scope>
    <scope>TRANSPORTER ACTIVITY</scope>
    <scope>SUBCELLULAR LOCATION</scope>
    <scope>TISSUE SPECIFICITY</scope>
    <source>
        <strain>C57BL/6J</strain>
        <tissue>Kidney</tissue>
    </source>
</reference>
<reference key="2">
    <citation type="submission" date="2000-02" db="EMBL/GenBank/DDBJ databases">
        <title>Cloning of new mammalian zinc transporter like genes.</title>
        <authorList>
            <person name="Zhu W."/>
            <person name="Mager S."/>
        </authorList>
    </citation>
    <scope>NUCLEOTIDE SEQUENCE [MRNA]</scope>
    <source>
        <tissue>Brain</tissue>
    </source>
</reference>
<reference key="3">
    <citation type="journal article" date="2005" name="Science">
        <title>The transcriptional landscape of the mammalian genome.</title>
        <authorList>
            <person name="Carninci P."/>
            <person name="Kasukawa T."/>
            <person name="Katayama S."/>
            <person name="Gough J."/>
            <person name="Frith M.C."/>
            <person name="Maeda N."/>
            <person name="Oyama R."/>
            <person name="Ravasi T."/>
            <person name="Lenhard B."/>
            <person name="Wells C."/>
            <person name="Kodzius R."/>
            <person name="Shimokawa K."/>
            <person name="Bajic V.B."/>
            <person name="Brenner S.E."/>
            <person name="Batalov S."/>
            <person name="Forrest A.R."/>
            <person name="Zavolan M."/>
            <person name="Davis M.J."/>
            <person name="Wilming L.G."/>
            <person name="Aidinis V."/>
            <person name="Allen J.E."/>
            <person name="Ambesi-Impiombato A."/>
            <person name="Apweiler R."/>
            <person name="Aturaliya R.N."/>
            <person name="Bailey T.L."/>
            <person name="Bansal M."/>
            <person name="Baxter L."/>
            <person name="Beisel K.W."/>
            <person name="Bersano T."/>
            <person name="Bono H."/>
            <person name="Chalk A.M."/>
            <person name="Chiu K.P."/>
            <person name="Choudhary V."/>
            <person name="Christoffels A."/>
            <person name="Clutterbuck D.R."/>
            <person name="Crowe M.L."/>
            <person name="Dalla E."/>
            <person name="Dalrymple B.P."/>
            <person name="de Bono B."/>
            <person name="Della Gatta G."/>
            <person name="di Bernardo D."/>
            <person name="Down T."/>
            <person name="Engstrom P."/>
            <person name="Fagiolini M."/>
            <person name="Faulkner G."/>
            <person name="Fletcher C.F."/>
            <person name="Fukushima T."/>
            <person name="Furuno M."/>
            <person name="Futaki S."/>
            <person name="Gariboldi M."/>
            <person name="Georgii-Hemming P."/>
            <person name="Gingeras T.R."/>
            <person name="Gojobori T."/>
            <person name="Green R.E."/>
            <person name="Gustincich S."/>
            <person name="Harbers M."/>
            <person name="Hayashi Y."/>
            <person name="Hensch T.K."/>
            <person name="Hirokawa N."/>
            <person name="Hill D."/>
            <person name="Huminiecki L."/>
            <person name="Iacono M."/>
            <person name="Ikeo K."/>
            <person name="Iwama A."/>
            <person name="Ishikawa T."/>
            <person name="Jakt M."/>
            <person name="Kanapin A."/>
            <person name="Katoh M."/>
            <person name="Kawasawa Y."/>
            <person name="Kelso J."/>
            <person name="Kitamura H."/>
            <person name="Kitano H."/>
            <person name="Kollias G."/>
            <person name="Krishnan S.P."/>
            <person name="Kruger A."/>
            <person name="Kummerfeld S.K."/>
            <person name="Kurochkin I.V."/>
            <person name="Lareau L.F."/>
            <person name="Lazarevic D."/>
            <person name="Lipovich L."/>
            <person name="Liu J."/>
            <person name="Liuni S."/>
            <person name="McWilliam S."/>
            <person name="Madan Babu M."/>
            <person name="Madera M."/>
            <person name="Marchionni L."/>
            <person name="Matsuda H."/>
            <person name="Matsuzawa S."/>
            <person name="Miki H."/>
            <person name="Mignone F."/>
            <person name="Miyake S."/>
            <person name="Morris K."/>
            <person name="Mottagui-Tabar S."/>
            <person name="Mulder N."/>
            <person name="Nakano N."/>
            <person name="Nakauchi H."/>
            <person name="Ng P."/>
            <person name="Nilsson R."/>
            <person name="Nishiguchi S."/>
            <person name="Nishikawa S."/>
            <person name="Nori F."/>
            <person name="Ohara O."/>
            <person name="Okazaki Y."/>
            <person name="Orlando V."/>
            <person name="Pang K.C."/>
            <person name="Pavan W.J."/>
            <person name="Pavesi G."/>
            <person name="Pesole G."/>
            <person name="Petrovsky N."/>
            <person name="Piazza S."/>
            <person name="Reed J."/>
            <person name="Reid J.F."/>
            <person name="Ring B.Z."/>
            <person name="Ringwald M."/>
            <person name="Rost B."/>
            <person name="Ruan Y."/>
            <person name="Salzberg S.L."/>
            <person name="Sandelin A."/>
            <person name="Schneider C."/>
            <person name="Schoenbach C."/>
            <person name="Sekiguchi K."/>
            <person name="Semple C.A."/>
            <person name="Seno S."/>
            <person name="Sessa L."/>
            <person name="Sheng Y."/>
            <person name="Shibata Y."/>
            <person name="Shimada H."/>
            <person name="Shimada K."/>
            <person name="Silva D."/>
            <person name="Sinclair B."/>
            <person name="Sperling S."/>
            <person name="Stupka E."/>
            <person name="Sugiura K."/>
            <person name="Sultana R."/>
            <person name="Takenaka Y."/>
            <person name="Taki K."/>
            <person name="Tammoja K."/>
            <person name="Tan S.L."/>
            <person name="Tang S."/>
            <person name="Taylor M.S."/>
            <person name="Tegner J."/>
            <person name="Teichmann S.A."/>
            <person name="Ueda H.R."/>
            <person name="van Nimwegen E."/>
            <person name="Verardo R."/>
            <person name="Wei C.L."/>
            <person name="Yagi K."/>
            <person name="Yamanishi H."/>
            <person name="Zabarovsky E."/>
            <person name="Zhu S."/>
            <person name="Zimmer A."/>
            <person name="Hide W."/>
            <person name="Bult C."/>
            <person name="Grimmond S.M."/>
            <person name="Teasdale R.D."/>
            <person name="Liu E.T."/>
            <person name="Brusic V."/>
            <person name="Quackenbush J."/>
            <person name="Wahlestedt C."/>
            <person name="Mattick J.S."/>
            <person name="Hume D.A."/>
            <person name="Kai C."/>
            <person name="Sasaki D."/>
            <person name="Tomaru Y."/>
            <person name="Fukuda S."/>
            <person name="Kanamori-Katayama M."/>
            <person name="Suzuki M."/>
            <person name="Aoki J."/>
            <person name="Arakawa T."/>
            <person name="Iida J."/>
            <person name="Imamura K."/>
            <person name="Itoh M."/>
            <person name="Kato T."/>
            <person name="Kawaji H."/>
            <person name="Kawagashira N."/>
            <person name="Kawashima T."/>
            <person name="Kojima M."/>
            <person name="Kondo S."/>
            <person name="Konno H."/>
            <person name="Nakano K."/>
            <person name="Ninomiya N."/>
            <person name="Nishio T."/>
            <person name="Okada M."/>
            <person name="Plessy C."/>
            <person name="Shibata K."/>
            <person name="Shiraki T."/>
            <person name="Suzuki S."/>
            <person name="Tagami M."/>
            <person name="Waki K."/>
            <person name="Watahiki A."/>
            <person name="Okamura-Oho Y."/>
            <person name="Suzuki H."/>
            <person name="Kawai J."/>
            <person name="Hayashizaki Y."/>
        </authorList>
    </citation>
    <scope>NUCLEOTIDE SEQUENCE [LARGE SCALE MRNA]</scope>
    <source>
        <strain>C57BL/6J</strain>
        <tissue>Pancreas</tissue>
        <tissue>Tongue</tissue>
    </source>
</reference>
<reference key="4">
    <citation type="journal article" date="2004" name="Genome Res.">
        <title>The status, quality, and expansion of the NIH full-length cDNA project: the Mammalian Gene Collection (MGC).</title>
        <authorList>
            <consortium name="The MGC Project Team"/>
        </authorList>
    </citation>
    <scope>NUCLEOTIDE SEQUENCE [LARGE SCALE MRNA]</scope>
    <source>
        <strain>FVB/N</strain>
        <tissue>Embryo</tissue>
        <tissue>Salivary gland</tissue>
    </source>
</reference>
<reference key="5">
    <citation type="journal article" date="2007" name="J. Biol. Chem.">
        <title>Znt7 (Slc30a7)-deficient mice display reduced body zinc status and body fat accumulation.</title>
        <authorList>
            <person name="Huang L."/>
            <person name="Yu Y.Y."/>
            <person name="Kirschke C.P."/>
            <person name="Gertz E.R."/>
            <person name="Lloyd K.K."/>
        </authorList>
    </citation>
    <scope>FUNCTION</scope>
    <scope>TISSUE SPECIFICITY</scope>
    <scope>DISRUPTION PHENOTYPE</scope>
</reference>
<reference key="6">
    <citation type="journal article" date="2009" name="Histol. Histopathol.">
        <title>Golgi apparatus localization of ZNT7 in the mouse cerebellum.</title>
        <authorList>
            <person name="Gao H.L."/>
            <person name="Feng W.Y."/>
            <person name="Li X.L."/>
            <person name="Xu H."/>
            <person name="Huang L."/>
            <person name="Wang Z.Y."/>
        </authorList>
    </citation>
    <scope>SUBCELLULAR LOCATION</scope>
    <scope>TISSUE SPECIFICITY</scope>
</reference>
<reference key="7">
    <citation type="journal article" date="2010" name="Cell">
        <title>A tissue-specific atlas of mouse protein phosphorylation and expression.</title>
        <authorList>
            <person name="Huttlin E.L."/>
            <person name="Jedrychowski M.P."/>
            <person name="Elias J.E."/>
            <person name="Goswami T."/>
            <person name="Rad R."/>
            <person name="Beausoleil S.A."/>
            <person name="Villen J."/>
            <person name="Haas W."/>
            <person name="Sowa M.E."/>
            <person name="Gygi S.P."/>
        </authorList>
    </citation>
    <scope>IDENTIFICATION BY MASS SPECTROMETRY [LARGE SCALE ANALYSIS]</scope>
    <source>
        <tissue>Kidney</tissue>
        <tissue>Liver</tissue>
        <tissue>Lung</tissue>
        <tissue>Pancreas</tissue>
        <tissue>Spleen</tissue>
        <tissue>Testis</tissue>
    </source>
</reference>
<accession>Q9JKN1</accession>
<accession>Q80Y27</accession>